<feature type="chain" id="PRO_0000251459" description="Ribulose bisphosphate carboxylase large chain 2">
    <location>
        <begin position="1"/>
        <end position="485"/>
    </location>
</feature>
<feature type="active site" description="Proton acceptor" evidence="1">
    <location>
        <position position="176"/>
    </location>
</feature>
<feature type="active site" description="Proton acceptor" evidence="1">
    <location>
        <position position="294"/>
    </location>
</feature>
<feature type="binding site" description="in homodimeric partner" evidence="1">
    <location>
        <position position="124"/>
    </location>
    <ligand>
        <name>substrate</name>
    </ligand>
</feature>
<feature type="binding site" evidence="1">
    <location>
        <position position="174"/>
    </location>
    <ligand>
        <name>substrate</name>
    </ligand>
</feature>
<feature type="binding site" evidence="1">
    <location>
        <position position="178"/>
    </location>
    <ligand>
        <name>substrate</name>
    </ligand>
</feature>
<feature type="binding site" description="via carbamate group" evidence="1">
    <location>
        <position position="202"/>
    </location>
    <ligand>
        <name>Mg(2+)</name>
        <dbReference type="ChEBI" id="CHEBI:18420"/>
    </ligand>
</feature>
<feature type="binding site" evidence="1">
    <location>
        <position position="204"/>
    </location>
    <ligand>
        <name>Mg(2+)</name>
        <dbReference type="ChEBI" id="CHEBI:18420"/>
    </ligand>
</feature>
<feature type="binding site" evidence="1">
    <location>
        <position position="205"/>
    </location>
    <ligand>
        <name>Mg(2+)</name>
        <dbReference type="ChEBI" id="CHEBI:18420"/>
    </ligand>
</feature>
<feature type="binding site" evidence="1">
    <location>
        <position position="295"/>
    </location>
    <ligand>
        <name>substrate</name>
    </ligand>
</feature>
<feature type="binding site" evidence="1">
    <location>
        <position position="327"/>
    </location>
    <ligand>
        <name>substrate</name>
    </ligand>
</feature>
<feature type="binding site" evidence="1">
    <location>
        <position position="379"/>
    </location>
    <ligand>
        <name>substrate</name>
    </ligand>
</feature>
<feature type="site" description="Transition state stabilizer" evidence="1">
    <location>
        <position position="334"/>
    </location>
</feature>
<feature type="modified residue" description="N6-carboxylysine" evidence="1">
    <location>
        <position position="202"/>
    </location>
</feature>
<organism>
    <name type="scientific">Rhodopseudomonas palustris (strain BisB5)</name>
    <dbReference type="NCBI Taxonomy" id="316057"/>
    <lineage>
        <taxon>Bacteria</taxon>
        <taxon>Pseudomonadati</taxon>
        <taxon>Pseudomonadota</taxon>
        <taxon>Alphaproteobacteria</taxon>
        <taxon>Hyphomicrobiales</taxon>
        <taxon>Nitrobacteraceae</taxon>
        <taxon>Rhodopseudomonas</taxon>
    </lineage>
</organism>
<accession>Q37G91</accession>
<comment type="function">
    <text evidence="1">RuBisCO catalyzes two reactions: the carboxylation of D-ribulose 1,5-bisphosphate, the primary event in carbon dioxide fixation, as well as the oxidative fragmentation of the pentose substrate. Both reactions occur simultaneously and in competition at the same active site.</text>
</comment>
<comment type="catalytic activity">
    <reaction evidence="1">
        <text>2 (2R)-3-phosphoglycerate + 2 H(+) = D-ribulose 1,5-bisphosphate + CO2 + H2O</text>
        <dbReference type="Rhea" id="RHEA:23124"/>
        <dbReference type="ChEBI" id="CHEBI:15377"/>
        <dbReference type="ChEBI" id="CHEBI:15378"/>
        <dbReference type="ChEBI" id="CHEBI:16526"/>
        <dbReference type="ChEBI" id="CHEBI:57870"/>
        <dbReference type="ChEBI" id="CHEBI:58272"/>
        <dbReference type="EC" id="4.1.1.39"/>
    </reaction>
</comment>
<comment type="catalytic activity">
    <reaction evidence="1">
        <text>D-ribulose 1,5-bisphosphate + O2 = 2-phosphoglycolate + (2R)-3-phosphoglycerate + 2 H(+)</text>
        <dbReference type="Rhea" id="RHEA:36631"/>
        <dbReference type="ChEBI" id="CHEBI:15378"/>
        <dbReference type="ChEBI" id="CHEBI:15379"/>
        <dbReference type="ChEBI" id="CHEBI:57870"/>
        <dbReference type="ChEBI" id="CHEBI:58033"/>
        <dbReference type="ChEBI" id="CHEBI:58272"/>
    </reaction>
</comment>
<comment type="cofactor">
    <cofactor evidence="1">
        <name>Mg(2+)</name>
        <dbReference type="ChEBI" id="CHEBI:18420"/>
    </cofactor>
    <text evidence="1">Binds 1 Mg(2+) ion per subunit.</text>
</comment>
<comment type="subunit">
    <text evidence="1">Heterohexadecamer of 8 large chains and 8 small chains.</text>
</comment>
<comment type="miscellaneous">
    <text evidence="1">The basic functional RuBisCO is composed of a large chain homodimer in a 'head-to-tail' conformation. In form I RuBisCO this homodimer is arranged in a barrel-like tetramer with the small subunits forming a tetrameric 'cap' on each end of the 'barrel'.</text>
</comment>
<comment type="similarity">
    <text evidence="1">Belongs to the RuBisCO large chain family. Type I subfamily.</text>
</comment>
<sequence>MNDSITVRGKDRYKSGVMEYKKMGYWEPDYVPKDTDVIALFRVTPQDGVDPIEASAAVAGESSTATWTVVWTDRLTAAEKYRAKCYRVDPVPNSPGQYFAYIAYDLDLFENGSIANLSASIIGNVFGFKPLKALRLEDMRLPIAYVKTFQGPATGIVVERERMDKFGRPLLGATVKPKLGLSGRNYGRVVYEALKGGLDFTKDDENINSQPFMHWRERFLYCMEAVNKAQAASGEIKGTYLNVTAGTMEEMYERAEFAKQLGSVIIMIDLVIGYTAIQSMAKWARRNDMILHLHRAGHSTYTRQRNHGVSFRVIAKWMRLAGVDHIHAGTVVGKLEGDPSTTKGYYDICREDYNPANLEHGLFFDQPWASLNKLMPVASGGIHAGQMHQLLDLLGEDVVLQFGGGTIGHPMGIAAGATANRVALEAMILARNEGRDYVHEGPEILAKAAQTCTPLKAALDTWKNVSFNYESTDTPDYAPTPSVSM</sequence>
<name>RBL1B_RHOPS</name>
<proteinExistence type="inferred from homology"/>
<reference key="1">
    <citation type="submission" date="2006-03" db="EMBL/GenBank/DDBJ databases">
        <title>Complete sequence of Rhodopseudomonas palustris BisB5.</title>
        <authorList>
            <consortium name="US DOE Joint Genome Institute"/>
            <person name="Copeland A."/>
            <person name="Lucas S."/>
            <person name="Lapidus A."/>
            <person name="Barry K."/>
            <person name="Detter J.C."/>
            <person name="Glavina del Rio T."/>
            <person name="Hammon N."/>
            <person name="Israni S."/>
            <person name="Dalin E."/>
            <person name="Tice H."/>
            <person name="Pitluck S."/>
            <person name="Chain P."/>
            <person name="Malfatti S."/>
            <person name="Shin M."/>
            <person name="Vergez L."/>
            <person name="Schmutz J."/>
            <person name="Larimer F."/>
            <person name="Land M."/>
            <person name="Hauser L."/>
            <person name="Pelletier D.A."/>
            <person name="Kyrpides N."/>
            <person name="Lykidis A."/>
            <person name="Oda Y."/>
            <person name="Harwood C.S."/>
            <person name="Richardson P."/>
        </authorList>
    </citation>
    <scope>NUCLEOTIDE SEQUENCE [LARGE SCALE GENOMIC DNA]</scope>
    <source>
        <strain>BisB5</strain>
    </source>
</reference>
<dbReference type="EC" id="4.1.1.39" evidence="1"/>
<dbReference type="EMBL" id="CP000283">
    <property type="protein sequence ID" value="ABE40943.1"/>
    <property type="molecule type" value="Genomic_DNA"/>
</dbReference>
<dbReference type="SMR" id="Q37G91"/>
<dbReference type="STRING" id="316057.RPD_3722"/>
<dbReference type="KEGG" id="rpd:RPD_3722"/>
<dbReference type="eggNOG" id="COG1850">
    <property type="taxonomic scope" value="Bacteria"/>
</dbReference>
<dbReference type="HOGENOM" id="CLU_031450_2_0_5"/>
<dbReference type="BioCyc" id="RPAL316057:RPD_RS18715-MONOMER"/>
<dbReference type="Proteomes" id="UP000001818">
    <property type="component" value="Chromosome"/>
</dbReference>
<dbReference type="GO" id="GO:0000287">
    <property type="term" value="F:magnesium ion binding"/>
    <property type="evidence" value="ECO:0007669"/>
    <property type="project" value="UniProtKB-UniRule"/>
</dbReference>
<dbReference type="GO" id="GO:0004497">
    <property type="term" value="F:monooxygenase activity"/>
    <property type="evidence" value="ECO:0007669"/>
    <property type="project" value="UniProtKB-KW"/>
</dbReference>
<dbReference type="GO" id="GO:0016984">
    <property type="term" value="F:ribulose-bisphosphate carboxylase activity"/>
    <property type="evidence" value="ECO:0007669"/>
    <property type="project" value="UniProtKB-UniRule"/>
</dbReference>
<dbReference type="GO" id="GO:0019253">
    <property type="term" value="P:reductive pentose-phosphate cycle"/>
    <property type="evidence" value="ECO:0007669"/>
    <property type="project" value="UniProtKB-UniRule"/>
</dbReference>
<dbReference type="CDD" id="cd08212">
    <property type="entry name" value="RuBisCO_large_I"/>
    <property type="match status" value="1"/>
</dbReference>
<dbReference type="Gene3D" id="3.20.20.110">
    <property type="entry name" value="Ribulose bisphosphate carboxylase, large subunit, C-terminal domain"/>
    <property type="match status" value="1"/>
</dbReference>
<dbReference type="Gene3D" id="3.30.70.150">
    <property type="entry name" value="RuBisCO large subunit, N-terminal domain"/>
    <property type="match status" value="1"/>
</dbReference>
<dbReference type="HAMAP" id="MF_01338">
    <property type="entry name" value="RuBisCO_L_type1"/>
    <property type="match status" value="1"/>
</dbReference>
<dbReference type="InterPro" id="IPR033966">
    <property type="entry name" value="RuBisCO"/>
</dbReference>
<dbReference type="InterPro" id="IPR020878">
    <property type="entry name" value="RuBisCo_large_chain_AS"/>
</dbReference>
<dbReference type="InterPro" id="IPR000685">
    <property type="entry name" value="RuBisCO_lsu_C"/>
</dbReference>
<dbReference type="InterPro" id="IPR036376">
    <property type="entry name" value="RuBisCO_lsu_C_sf"/>
</dbReference>
<dbReference type="InterPro" id="IPR017443">
    <property type="entry name" value="RuBisCO_lsu_fd_N"/>
</dbReference>
<dbReference type="InterPro" id="IPR036422">
    <property type="entry name" value="RuBisCO_lsu_N_sf"/>
</dbReference>
<dbReference type="InterPro" id="IPR020888">
    <property type="entry name" value="RuBisCO_lsuI"/>
</dbReference>
<dbReference type="NCBIfam" id="NF003252">
    <property type="entry name" value="PRK04208.1"/>
    <property type="match status" value="1"/>
</dbReference>
<dbReference type="PANTHER" id="PTHR42704">
    <property type="entry name" value="RIBULOSE BISPHOSPHATE CARBOXYLASE"/>
    <property type="match status" value="1"/>
</dbReference>
<dbReference type="PANTHER" id="PTHR42704:SF17">
    <property type="entry name" value="RIBULOSE BISPHOSPHATE CARBOXYLASE LARGE CHAIN"/>
    <property type="match status" value="1"/>
</dbReference>
<dbReference type="Pfam" id="PF00016">
    <property type="entry name" value="RuBisCO_large"/>
    <property type="match status" value="1"/>
</dbReference>
<dbReference type="Pfam" id="PF02788">
    <property type="entry name" value="RuBisCO_large_N"/>
    <property type="match status" value="1"/>
</dbReference>
<dbReference type="SFLD" id="SFLDG01052">
    <property type="entry name" value="RuBisCO"/>
    <property type="match status" value="1"/>
</dbReference>
<dbReference type="SFLD" id="SFLDS00014">
    <property type="entry name" value="RuBisCO"/>
    <property type="match status" value="1"/>
</dbReference>
<dbReference type="SFLD" id="SFLDG00301">
    <property type="entry name" value="RuBisCO-like_proteins"/>
    <property type="match status" value="1"/>
</dbReference>
<dbReference type="SUPFAM" id="SSF51649">
    <property type="entry name" value="RuBisCo, C-terminal domain"/>
    <property type="match status" value="1"/>
</dbReference>
<dbReference type="SUPFAM" id="SSF54966">
    <property type="entry name" value="RuBisCO, large subunit, small (N-terminal) domain"/>
    <property type="match status" value="1"/>
</dbReference>
<dbReference type="PROSITE" id="PS00157">
    <property type="entry name" value="RUBISCO_LARGE"/>
    <property type="match status" value="1"/>
</dbReference>
<evidence type="ECO:0000255" key="1">
    <source>
        <dbReference type="HAMAP-Rule" id="MF_01338"/>
    </source>
</evidence>
<protein>
    <recommendedName>
        <fullName evidence="1">Ribulose bisphosphate carboxylase large chain 2</fullName>
        <shortName evidence="1">RuBisCO large subunit 2</shortName>
        <ecNumber evidence="1">4.1.1.39</ecNumber>
    </recommendedName>
</protein>
<gene>
    <name evidence="1" type="primary">cbbL2</name>
    <name type="ordered locus">RPD_3722</name>
</gene>
<keyword id="KW-0113">Calvin cycle</keyword>
<keyword id="KW-0120">Carbon dioxide fixation</keyword>
<keyword id="KW-0456">Lyase</keyword>
<keyword id="KW-0460">Magnesium</keyword>
<keyword id="KW-0479">Metal-binding</keyword>
<keyword id="KW-0503">Monooxygenase</keyword>
<keyword id="KW-0560">Oxidoreductase</keyword>
<keyword id="KW-0602">Photosynthesis</keyword>